<reference key="1">
    <citation type="submission" date="2007-04" db="EMBL/GenBank/DDBJ databases">
        <title>Genome sequence of the thermophilic hydrogen-producing bacterium Caldicellulosiruptor saccharolyticus DSM 8903.</title>
        <authorList>
            <person name="Copeland A."/>
            <person name="Lucas S."/>
            <person name="Lapidus A."/>
            <person name="Barry K."/>
            <person name="Detter J.C."/>
            <person name="Glavina del Rio T."/>
            <person name="Hammon N."/>
            <person name="Israni S."/>
            <person name="Dalin E."/>
            <person name="Tice H."/>
            <person name="Pitluck S."/>
            <person name="Kiss H."/>
            <person name="Brettin T."/>
            <person name="Bruce D."/>
            <person name="Han C."/>
            <person name="Schmutz J."/>
            <person name="Larimer F."/>
            <person name="Land M."/>
            <person name="Hauser L."/>
            <person name="Kyrpides N."/>
            <person name="Lykidis A."/>
            <person name="van de Werken H.J.G."/>
            <person name="Verhaart M.R.A."/>
            <person name="VanFossen A.L."/>
            <person name="Lewis D.L."/>
            <person name="Nichols J.D."/>
            <person name="Goorissen H.P."/>
            <person name="van Niel E.W.J."/>
            <person name="Stams F.J.M."/>
            <person name="Willquist K.U."/>
            <person name="Ward D.E."/>
            <person name="van der Oost J."/>
            <person name="Kelly R.M."/>
            <person name="Kengen S.M.W."/>
            <person name="Richardson P."/>
        </authorList>
    </citation>
    <scope>NUCLEOTIDE SEQUENCE [LARGE SCALE GENOMIC DNA]</scope>
    <source>
        <strain>ATCC 43494 / DSM 8903 / Tp8T 6331</strain>
    </source>
</reference>
<accession>A4XIS1</accession>
<comment type="function">
    <text evidence="1">Catalyzes the last two sequential reactions in the de novo biosynthetic pathway for UDP-N-acetylglucosamine (UDP-GlcNAc). The C-terminal domain catalyzes the transfer of acetyl group from acetyl coenzyme A to glucosamine-1-phosphate (GlcN-1-P) to produce N-acetylglucosamine-1-phosphate (GlcNAc-1-P), which is converted into UDP-GlcNAc by the transfer of uridine 5-monophosphate (from uridine 5-triphosphate), a reaction catalyzed by the N-terminal domain.</text>
</comment>
<comment type="catalytic activity">
    <reaction evidence="1">
        <text>alpha-D-glucosamine 1-phosphate + acetyl-CoA = N-acetyl-alpha-D-glucosamine 1-phosphate + CoA + H(+)</text>
        <dbReference type="Rhea" id="RHEA:13725"/>
        <dbReference type="ChEBI" id="CHEBI:15378"/>
        <dbReference type="ChEBI" id="CHEBI:57287"/>
        <dbReference type="ChEBI" id="CHEBI:57288"/>
        <dbReference type="ChEBI" id="CHEBI:57776"/>
        <dbReference type="ChEBI" id="CHEBI:58516"/>
        <dbReference type="EC" id="2.3.1.157"/>
    </reaction>
</comment>
<comment type="catalytic activity">
    <reaction evidence="1">
        <text>N-acetyl-alpha-D-glucosamine 1-phosphate + UTP + H(+) = UDP-N-acetyl-alpha-D-glucosamine + diphosphate</text>
        <dbReference type="Rhea" id="RHEA:13509"/>
        <dbReference type="ChEBI" id="CHEBI:15378"/>
        <dbReference type="ChEBI" id="CHEBI:33019"/>
        <dbReference type="ChEBI" id="CHEBI:46398"/>
        <dbReference type="ChEBI" id="CHEBI:57705"/>
        <dbReference type="ChEBI" id="CHEBI:57776"/>
        <dbReference type="EC" id="2.7.7.23"/>
    </reaction>
</comment>
<comment type="cofactor">
    <cofactor evidence="1">
        <name>Mg(2+)</name>
        <dbReference type="ChEBI" id="CHEBI:18420"/>
    </cofactor>
    <text evidence="1">Binds 1 Mg(2+) ion per subunit.</text>
</comment>
<comment type="pathway">
    <text evidence="1">Nucleotide-sugar biosynthesis; UDP-N-acetyl-alpha-D-glucosamine biosynthesis; N-acetyl-alpha-D-glucosamine 1-phosphate from alpha-D-glucosamine 6-phosphate (route II): step 2/2.</text>
</comment>
<comment type="pathway">
    <text evidence="1">Nucleotide-sugar biosynthesis; UDP-N-acetyl-alpha-D-glucosamine biosynthesis; UDP-N-acetyl-alpha-D-glucosamine from N-acetyl-alpha-D-glucosamine 1-phosphate: step 1/1.</text>
</comment>
<comment type="pathway">
    <text evidence="1">Bacterial outer membrane biogenesis; LPS lipid A biosynthesis.</text>
</comment>
<comment type="subunit">
    <text evidence="1">Homotrimer.</text>
</comment>
<comment type="subcellular location">
    <subcellularLocation>
        <location evidence="1">Cytoplasm</location>
    </subcellularLocation>
</comment>
<comment type="similarity">
    <text evidence="1">In the N-terminal section; belongs to the N-acetylglucosamine-1-phosphate uridyltransferase family.</text>
</comment>
<comment type="similarity">
    <text evidence="1">In the C-terminal section; belongs to the transferase hexapeptide repeat family.</text>
</comment>
<proteinExistence type="inferred from homology"/>
<protein>
    <recommendedName>
        <fullName evidence="1">Bifunctional protein GlmU</fullName>
    </recommendedName>
    <domain>
        <recommendedName>
            <fullName evidence="1">UDP-N-acetylglucosamine pyrophosphorylase</fullName>
            <ecNumber evidence="1">2.7.7.23</ecNumber>
        </recommendedName>
        <alternativeName>
            <fullName evidence="1">N-acetylglucosamine-1-phosphate uridyltransferase</fullName>
        </alternativeName>
    </domain>
    <domain>
        <recommendedName>
            <fullName evidence="1">Glucosamine-1-phosphate N-acetyltransferase</fullName>
            <ecNumber evidence="1">2.3.1.157</ecNumber>
        </recommendedName>
    </domain>
</protein>
<organism>
    <name type="scientific">Caldicellulosiruptor saccharolyticus (strain ATCC 43494 / DSM 8903 / Tp8T 6331)</name>
    <dbReference type="NCBI Taxonomy" id="351627"/>
    <lineage>
        <taxon>Bacteria</taxon>
        <taxon>Bacillati</taxon>
        <taxon>Bacillota</taxon>
        <taxon>Bacillota incertae sedis</taxon>
        <taxon>Caldicellulosiruptorales</taxon>
        <taxon>Caldicellulosiruptoraceae</taxon>
        <taxon>Caldicellulosiruptor</taxon>
    </lineage>
</organism>
<sequence length="463" mass="52009">MSKKSTFIILAAGEGKRMKSKYSKVVQKIMGKPMILYIIDEIEKNFEDGRIVVVVGNKKEDVYKVLEGRNVRFAYQEKQLGTAHAVMCAMSEISDDSEDVFVLYGDVPFIKADTLKKLSQKRKEEAAALCLLTAIFENPYGYGRIIADENGNVLKIVEERDATEEQRKIKKINPGFYCFEKQELVNVLSKIDNKNSQNEYYLTDAIEILNRSGKKVVKVTVEDNFEVMGINSRYELFVAEQELKLRINKEHLSKGVQIIDIYSTYIHPDAQIGKDTVIYPGTFILGKTSIGEDCVIGPQSYIVDSKIGNNCHILFSVIENSEIKDNVKIGPYAHLRPNSLLEEGVKIGNFVEIKNSKLGKNTKSAHLTYIGDADIGENVNLGCGTIFVNYDGYKKHRTVVENNAFIGCNSNLIAPVKIGENAYVAAGSTITEDVPANALAIARERQTNKEGWVLRRKQMYENR</sequence>
<evidence type="ECO:0000255" key="1">
    <source>
        <dbReference type="HAMAP-Rule" id="MF_01631"/>
    </source>
</evidence>
<gene>
    <name evidence="1" type="primary">glmU</name>
    <name type="ordered locus">Csac_1203</name>
</gene>
<keyword id="KW-0012">Acyltransferase</keyword>
<keyword id="KW-0133">Cell shape</keyword>
<keyword id="KW-0961">Cell wall biogenesis/degradation</keyword>
<keyword id="KW-0963">Cytoplasm</keyword>
<keyword id="KW-0460">Magnesium</keyword>
<keyword id="KW-0479">Metal-binding</keyword>
<keyword id="KW-0511">Multifunctional enzyme</keyword>
<keyword id="KW-0548">Nucleotidyltransferase</keyword>
<keyword id="KW-0573">Peptidoglycan synthesis</keyword>
<keyword id="KW-0677">Repeat</keyword>
<keyword id="KW-0808">Transferase</keyword>
<name>GLMU_CALS8</name>
<feature type="chain" id="PRO_0000337712" description="Bifunctional protein GlmU">
    <location>
        <begin position="1"/>
        <end position="463"/>
    </location>
</feature>
<feature type="region of interest" description="Pyrophosphorylase" evidence="1">
    <location>
        <begin position="1"/>
        <end position="233"/>
    </location>
</feature>
<feature type="region of interest" description="Linker" evidence="1">
    <location>
        <begin position="234"/>
        <end position="254"/>
    </location>
</feature>
<feature type="region of interest" description="N-acetyltransferase" evidence="1">
    <location>
        <begin position="255"/>
        <end position="463"/>
    </location>
</feature>
<feature type="active site" description="Proton acceptor" evidence="1">
    <location>
        <position position="366"/>
    </location>
</feature>
<feature type="binding site" evidence="1">
    <location>
        <begin position="10"/>
        <end position="13"/>
    </location>
    <ligand>
        <name>UDP-N-acetyl-alpha-D-glucosamine</name>
        <dbReference type="ChEBI" id="CHEBI:57705"/>
    </ligand>
</feature>
<feature type="binding site" evidence="1">
    <location>
        <position position="24"/>
    </location>
    <ligand>
        <name>UDP-N-acetyl-alpha-D-glucosamine</name>
        <dbReference type="ChEBI" id="CHEBI:57705"/>
    </ligand>
</feature>
<feature type="binding site" evidence="1">
    <location>
        <position position="76"/>
    </location>
    <ligand>
        <name>UDP-N-acetyl-alpha-D-glucosamine</name>
        <dbReference type="ChEBI" id="CHEBI:57705"/>
    </ligand>
</feature>
<feature type="binding site" evidence="1">
    <location>
        <begin position="81"/>
        <end position="82"/>
    </location>
    <ligand>
        <name>UDP-N-acetyl-alpha-D-glucosamine</name>
        <dbReference type="ChEBI" id="CHEBI:57705"/>
    </ligand>
</feature>
<feature type="binding site" evidence="1">
    <location>
        <begin position="104"/>
        <end position="106"/>
    </location>
    <ligand>
        <name>UDP-N-acetyl-alpha-D-glucosamine</name>
        <dbReference type="ChEBI" id="CHEBI:57705"/>
    </ligand>
</feature>
<feature type="binding site" evidence="1">
    <location>
        <position position="106"/>
    </location>
    <ligand>
        <name>Mg(2+)</name>
        <dbReference type="ChEBI" id="CHEBI:18420"/>
    </ligand>
</feature>
<feature type="binding site" evidence="1">
    <location>
        <position position="143"/>
    </location>
    <ligand>
        <name>UDP-N-acetyl-alpha-D-glucosamine</name>
        <dbReference type="ChEBI" id="CHEBI:57705"/>
    </ligand>
</feature>
<feature type="binding site" evidence="1">
    <location>
        <position position="158"/>
    </location>
    <ligand>
        <name>UDP-N-acetyl-alpha-D-glucosamine</name>
        <dbReference type="ChEBI" id="CHEBI:57705"/>
    </ligand>
</feature>
<feature type="binding site" evidence="1">
    <location>
        <position position="173"/>
    </location>
    <ligand>
        <name>UDP-N-acetyl-alpha-D-glucosamine</name>
        <dbReference type="ChEBI" id="CHEBI:57705"/>
    </ligand>
</feature>
<feature type="binding site" evidence="1">
    <location>
        <position position="231"/>
    </location>
    <ligand>
        <name>Mg(2+)</name>
        <dbReference type="ChEBI" id="CHEBI:18420"/>
    </ligand>
</feature>
<feature type="binding site" evidence="1">
    <location>
        <position position="231"/>
    </location>
    <ligand>
        <name>UDP-N-acetyl-alpha-D-glucosamine</name>
        <dbReference type="ChEBI" id="CHEBI:57705"/>
    </ligand>
</feature>
<feature type="binding site" evidence="1">
    <location>
        <position position="336"/>
    </location>
    <ligand>
        <name>UDP-N-acetyl-alpha-D-glucosamine</name>
        <dbReference type="ChEBI" id="CHEBI:57705"/>
    </ligand>
</feature>
<feature type="binding site" evidence="1">
    <location>
        <position position="354"/>
    </location>
    <ligand>
        <name>UDP-N-acetyl-alpha-D-glucosamine</name>
        <dbReference type="ChEBI" id="CHEBI:57705"/>
    </ligand>
</feature>
<feature type="binding site" evidence="1">
    <location>
        <position position="369"/>
    </location>
    <ligand>
        <name>UDP-N-acetyl-alpha-D-glucosamine</name>
        <dbReference type="ChEBI" id="CHEBI:57705"/>
    </ligand>
</feature>
<feature type="binding site" evidence="1">
    <location>
        <position position="380"/>
    </location>
    <ligand>
        <name>UDP-N-acetyl-alpha-D-glucosamine</name>
        <dbReference type="ChEBI" id="CHEBI:57705"/>
    </ligand>
</feature>
<feature type="binding site" evidence="1">
    <location>
        <begin position="389"/>
        <end position="390"/>
    </location>
    <ligand>
        <name>acetyl-CoA</name>
        <dbReference type="ChEBI" id="CHEBI:57288"/>
    </ligand>
</feature>
<feature type="binding site" evidence="1">
    <location>
        <position position="426"/>
    </location>
    <ligand>
        <name>acetyl-CoA</name>
        <dbReference type="ChEBI" id="CHEBI:57288"/>
    </ligand>
</feature>
<feature type="binding site" evidence="1">
    <location>
        <position position="443"/>
    </location>
    <ligand>
        <name>acetyl-CoA</name>
        <dbReference type="ChEBI" id="CHEBI:57288"/>
    </ligand>
</feature>
<dbReference type="EC" id="2.7.7.23" evidence="1"/>
<dbReference type="EC" id="2.3.1.157" evidence="1"/>
<dbReference type="EMBL" id="CP000679">
    <property type="protein sequence ID" value="ABP66806.1"/>
    <property type="molecule type" value="Genomic_DNA"/>
</dbReference>
<dbReference type="RefSeq" id="WP_011916742.1">
    <property type="nucleotide sequence ID" value="NC_009437.1"/>
</dbReference>
<dbReference type="SMR" id="A4XIS1"/>
<dbReference type="STRING" id="351627.Csac_1203"/>
<dbReference type="KEGG" id="csc:Csac_1203"/>
<dbReference type="eggNOG" id="COG1207">
    <property type="taxonomic scope" value="Bacteria"/>
</dbReference>
<dbReference type="HOGENOM" id="CLU_029499_15_2_9"/>
<dbReference type="OrthoDB" id="9775031at2"/>
<dbReference type="UniPathway" id="UPA00113">
    <property type="reaction ID" value="UER00532"/>
</dbReference>
<dbReference type="UniPathway" id="UPA00113">
    <property type="reaction ID" value="UER00533"/>
</dbReference>
<dbReference type="UniPathway" id="UPA00973"/>
<dbReference type="Proteomes" id="UP000000256">
    <property type="component" value="Chromosome"/>
</dbReference>
<dbReference type="GO" id="GO:0005737">
    <property type="term" value="C:cytoplasm"/>
    <property type="evidence" value="ECO:0007669"/>
    <property type="project" value="UniProtKB-SubCell"/>
</dbReference>
<dbReference type="GO" id="GO:0016020">
    <property type="term" value="C:membrane"/>
    <property type="evidence" value="ECO:0007669"/>
    <property type="project" value="GOC"/>
</dbReference>
<dbReference type="GO" id="GO:0019134">
    <property type="term" value="F:glucosamine-1-phosphate N-acetyltransferase activity"/>
    <property type="evidence" value="ECO:0007669"/>
    <property type="project" value="UniProtKB-UniRule"/>
</dbReference>
<dbReference type="GO" id="GO:0000287">
    <property type="term" value="F:magnesium ion binding"/>
    <property type="evidence" value="ECO:0007669"/>
    <property type="project" value="UniProtKB-UniRule"/>
</dbReference>
<dbReference type="GO" id="GO:0003977">
    <property type="term" value="F:UDP-N-acetylglucosamine diphosphorylase activity"/>
    <property type="evidence" value="ECO:0007669"/>
    <property type="project" value="UniProtKB-UniRule"/>
</dbReference>
<dbReference type="GO" id="GO:0000902">
    <property type="term" value="P:cell morphogenesis"/>
    <property type="evidence" value="ECO:0007669"/>
    <property type="project" value="UniProtKB-UniRule"/>
</dbReference>
<dbReference type="GO" id="GO:0071555">
    <property type="term" value="P:cell wall organization"/>
    <property type="evidence" value="ECO:0007669"/>
    <property type="project" value="UniProtKB-KW"/>
</dbReference>
<dbReference type="GO" id="GO:0009245">
    <property type="term" value="P:lipid A biosynthetic process"/>
    <property type="evidence" value="ECO:0007669"/>
    <property type="project" value="UniProtKB-UniRule"/>
</dbReference>
<dbReference type="GO" id="GO:0009252">
    <property type="term" value="P:peptidoglycan biosynthetic process"/>
    <property type="evidence" value="ECO:0007669"/>
    <property type="project" value="UniProtKB-UniRule"/>
</dbReference>
<dbReference type="GO" id="GO:0008360">
    <property type="term" value="P:regulation of cell shape"/>
    <property type="evidence" value="ECO:0007669"/>
    <property type="project" value="UniProtKB-KW"/>
</dbReference>
<dbReference type="GO" id="GO:0006048">
    <property type="term" value="P:UDP-N-acetylglucosamine biosynthetic process"/>
    <property type="evidence" value="ECO:0007669"/>
    <property type="project" value="UniProtKB-UniPathway"/>
</dbReference>
<dbReference type="CDD" id="cd02540">
    <property type="entry name" value="GT2_GlmU_N_bac"/>
    <property type="match status" value="1"/>
</dbReference>
<dbReference type="CDD" id="cd03353">
    <property type="entry name" value="LbH_GlmU_C"/>
    <property type="match status" value="1"/>
</dbReference>
<dbReference type="Gene3D" id="2.160.10.10">
    <property type="entry name" value="Hexapeptide repeat proteins"/>
    <property type="match status" value="1"/>
</dbReference>
<dbReference type="Gene3D" id="3.90.550.10">
    <property type="entry name" value="Spore Coat Polysaccharide Biosynthesis Protein SpsA, Chain A"/>
    <property type="match status" value="1"/>
</dbReference>
<dbReference type="HAMAP" id="MF_01631">
    <property type="entry name" value="GlmU"/>
    <property type="match status" value="1"/>
</dbReference>
<dbReference type="InterPro" id="IPR005882">
    <property type="entry name" value="Bifunctional_GlmU"/>
</dbReference>
<dbReference type="InterPro" id="IPR050065">
    <property type="entry name" value="GlmU-like"/>
</dbReference>
<dbReference type="InterPro" id="IPR038009">
    <property type="entry name" value="GlmU_C_LbH"/>
</dbReference>
<dbReference type="InterPro" id="IPR001451">
    <property type="entry name" value="Hexapep"/>
</dbReference>
<dbReference type="InterPro" id="IPR018357">
    <property type="entry name" value="Hexapep_transf_CS"/>
</dbReference>
<dbReference type="InterPro" id="IPR025877">
    <property type="entry name" value="MobA-like_NTP_Trfase"/>
</dbReference>
<dbReference type="InterPro" id="IPR029044">
    <property type="entry name" value="Nucleotide-diphossugar_trans"/>
</dbReference>
<dbReference type="InterPro" id="IPR011004">
    <property type="entry name" value="Trimer_LpxA-like_sf"/>
</dbReference>
<dbReference type="NCBIfam" id="TIGR01173">
    <property type="entry name" value="glmU"/>
    <property type="match status" value="1"/>
</dbReference>
<dbReference type="NCBIfam" id="NF010934">
    <property type="entry name" value="PRK14354.1"/>
    <property type="match status" value="1"/>
</dbReference>
<dbReference type="PANTHER" id="PTHR43584:SF3">
    <property type="entry name" value="BIFUNCTIONAL PROTEIN GLMU"/>
    <property type="match status" value="1"/>
</dbReference>
<dbReference type="PANTHER" id="PTHR43584">
    <property type="entry name" value="NUCLEOTIDYL TRANSFERASE"/>
    <property type="match status" value="1"/>
</dbReference>
<dbReference type="Pfam" id="PF00132">
    <property type="entry name" value="Hexapep"/>
    <property type="match status" value="3"/>
</dbReference>
<dbReference type="Pfam" id="PF12804">
    <property type="entry name" value="NTP_transf_3"/>
    <property type="match status" value="1"/>
</dbReference>
<dbReference type="SUPFAM" id="SSF53448">
    <property type="entry name" value="Nucleotide-diphospho-sugar transferases"/>
    <property type="match status" value="1"/>
</dbReference>
<dbReference type="SUPFAM" id="SSF51161">
    <property type="entry name" value="Trimeric LpxA-like enzymes"/>
    <property type="match status" value="1"/>
</dbReference>
<dbReference type="PROSITE" id="PS00101">
    <property type="entry name" value="HEXAPEP_TRANSFERASES"/>
    <property type="match status" value="1"/>
</dbReference>